<evidence type="ECO:0000255" key="1">
    <source>
        <dbReference type="HAMAP-Rule" id="MF_00394"/>
    </source>
</evidence>
<name>GPDA_FRATN</name>
<sequence>MQKNILVLGAGAWGTALALQLAYRGHNVRINSWKAEHNEQMLKDNNNHKYLPSIEKFPSRLKAIQDWQANISEFDNILVATPSSGFKNTILELKEYILPQQNIISATKGFCHDSYALLSEIAEDILPTTKFALLTGPSFAKELANQLPTAVVVASKDIAYARYVQELFSNENFRCYTTTDIIGAQVGGAVKNVLAITAGIAAGMEFGVNAHAALITRGLAEIKKLGLKLGANSETFIGLSCLGDLLLTCSDNQSRNRRFGLYLGQGMTIQQALKEVNNVVEGYFTAKAVYNLAKKHNVEMPLVFATYRILYEAADPRDIVKELMTRQLKNEN</sequence>
<protein>
    <recommendedName>
        <fullName evidence="1">Glycerol-3-phosphate dehydrogenase [NAD(P)+]</fullName>
        <ecNumber evidence="1">1.1.1.94</ecNumber>
    </recommendedName>
    <alternativeName>
        <fullName evidence="1">NAD(P)(+)-dependent glycerol-3-phosphate dehydrogenase</fullName>
    </alternativeName>
    <alternativeName>
        <fullName evidence="1">NAD(P)H-dependent dihydroxyacetone-phosphate reductase</fullName>
    </alternativeName>
</protein>
<comment type="function">
    <text evidence="1">Catalyzes the reduction of the glycolytic intermediate dihydroxyacetone phosphate (DHAP) to sn-glycerol 3-phosphate (G3P), the key precursor for phospholipid synthesis.</text>
</comment>
<comment type="catalytic activity">
    <reaction evidence="1">
        <text>sn-glycerol 3-phosphate + NAD(+) = dihydroxyacetone phosphate + NADH + H(+)</text>
        <dbReference type="Rhea" id="RHEA:11092"/>
        <dbReference type="ChEBI" id="CHEBI:15378"/>
        <dbReference type="ChEBI" id="CHEBI:57540"/>
        <dbReference type="ChEBI" id="CHEBI:57597"/>
        <dbReference type="ChEBI" id="CHEBI:57642"/>
        <dbReference type="ChEBI" id="CHEBI:57945"/>
        <dbReference type="EC" id="1.1.1.94"/>
    </reaction>
    <physiologicalReaction direction="right-to-left" evidence="1">
        <dbReference type="Rhea" id="RHEA:11094"/>
    </physiologicalReaction>
</comment>
<comment type="catalytic activity">
    <reaction evidence="1">
        <text>sn-glycerol 3-phosphate + NADP(+) = dihydroxyacetone phosphate + NADPH + H(+)</text>
        <dbReference type="Rhea" id="RHEA:11096"/>
        <dbReference type="ChEBI" id="CHEBI:15378"/>
        <dbReference type="ChEBI" id="CHEBI:57597"/>
        <dbReference type="ChEBI" id="CHEBI:57642"/>
        <dbReference type="ChEBI" id="CHEBI:57783"/>
        <dbReference type="ChEBI" id="CHEBI:58349"/>
        <dbReference type="EC" id="1.1.1.94"/>
    </reaction>
    <physiologicalReaction direction="right-to-left" evidence="1">
        <dbReference type="Rhea" id="RHEA:11098"/>
    </physiologicalReaction>
</comment>
<comment type="pathway">
    <text evidence="1">Membrane lipid metabolism; glycerophospholipid metabolism.</text>
</comment>
<comment type="subcellular location">
    <subcellularLocation>
        <location evidence="1">Cytoplasm</location>
    </subcellularLocation>
</comment>
<comment type="similarity">
    <text evidence="1">Belongs to the NAD-dependent glycerol-3-phosphate dehydrogenase family.</text>
</comment>
<organism>
    <name type="scientific">Francisella tularensis subsp. novicida (strain U112)</name>
    <dbReference type="NCBI Taxonomy" id="401614"/>
    <lineage>
        <taxon>Bacteria</taxon>
        <taxon>Pseudomonadati</taxon>
        <taxon>Pseudomonadota</taxon>
        <taxon>Gammaproteobacteria</taxon>
        <taxon>Thiotrichales</taxon>
        <taxon>Francisellaceae</taxon>
        <taxon>Francisella</taxon>
    </lineage>
</organism>
<dbReference type="EC" id="1.1.1.94" evidence="1"/>
<dbReference type="EMBL" id="CP000439">
    <property type="protein sequence ID" value="ABK89300.1"/>
    <property type="molecule type" value="Genomic_DNA"/>
</dbReference>
<dbReference type="RefSeq" id="WP_003038428.1">
    <property type="nucleotide sequence ID" value="NC_008601.1"/>
</dbReference>
<dbReference type="SMR" id="A0Q4Y5"/>
<dbReference type="KEGG" id="ftn:FTN_0397"/>
<dbReference type="KEGG" id="ftx:AW25_1636"/>
<dbReference type="BioCyc" id="FTUL401614:G1G75-416-MONOMER"/>
<dbReference type="UniPathway" id="UPA00940"/>
<dbReference type="Proteomes" id="UP000000762">
    <property type="component" value="Chromosome"/>
</dbReference>
<dbReference type="GO" id="GO:0005829">
    <property type="term" value="C:cytosol"/>
    <property type="evidence" value="ECO:0007669"/>
    <property type="project" value="TreeGrafter"/>
</dbReference>
<dbReference type="GO" id="GO:0047952">
    <property type="term" value="F:glycerol-3-phosphate dehydrogenase [NAD(P)+] activity"/>
    <property type="evidence" value="ECO:0007669"/>
    <property type="project" value="UniProtKB-UniRule"/>
</dbReference>
<dbReference type="GO" id="GO:0051287">
    <property type="term" value="F:NAD binding"/>
    <property type="evidence" value="ECO:0007669"/>
    <property type="project" value="InterPro"/>
</dbReference>
<dbReference type="GO" id="GO:0005975">
    <property type="term" value="P:carbohydrate metabolic process"/>
    <property type="evidence" value="ECO:0007669"/>
    <property type="project" value="InterPro"/>
</dbReference>
<dbReference type="GO" id="GO:0046167">
    <property type="term" value="P:glycerol-3-phosphate biosynthetic process"/>
    <property type="evidence" value="ECO:0007669"/>
    <property type="project" value="UniProtKB-UniRule"/>
</dbReference>
<dbReference type="GO" id="GO:0046168">
    <property type="term" value="P:glycerol-3-phosphate catabolic process"/>
    <property type="evidence" value="ECO:0007669"/>
    <property type="project" value="InterPro"/>
</dbReference>
<dbReference type="GO" id="GO:0046474">
    <property type="term" value="P:glycerophospholipid biosynthetic process"/>
    <property type="evidence" value="ECO:0007669"/>
    <property type="project" value="TreeGrafter"/>
</dbReference>
<dbReference type="FunFam" id="1.10.1040.10:FF:000001">
    <property type="entry name" value="Glycerol-3-phosphate dehydrogenase [NAD(P)+]"/>
    <property type="match status" value="1"/>
</dbReference>
<dbReference type="FunFam" id="3.40.50.720:FF:000019">
    <property type="entry name" value="Glycerol-3-phosphate dehydrogenase [NAD(P)+]"/>
    <property type="match status" value="1"/>
</dbReference>
<dbReference type="Gene3D" id="1.10.1040.10">
    <property type="entry name" value="N-(1-d-carboxylethyl)-l-norvaline Dehydrogenase, domain 2"/>
    <property type="match status" value="1"/>
</dbReference>
<dbReference type="Gene3D" id="3.40.50.720">
    <property type="entry name" value="NAD(P)-binding Rossmann-like Domain"/>
    <property type="match status" value="1"/>
</dbReference>
<dbReference type="HAMAP" id="MF_00394">
    <property type="entry name" value="NAD_Glyc3P_dehydrog"/>
    <property type="match status" value="1"/>
</dbReference>
<dbReference type="InterPro" id="IPR008927">
    <property type="entry name" value="6-PGluconate_DH-like_C_sf"/>
</dbReference>
<dbReference type="InterPro" id="IPR013328">
    <property type="entry name" value="6PGD_dom2"/>
</dbReference>
<dbReference type="InterPro" id="IPR006168">
    <property type="entry name" value="G3P_DH_NAD-dep"/>
</dbReference>
<dbReference type="InterPro" id="IPR006109">
    <property type="entry name" value="G3P_DH_NAD-dep_C"/>
</dbReference>
<dbReference type="InterPro" id="IPR011128">
    <property type="entry name" value="G3P_DH_NAD-dep_N"/>
</dbReference>
<dbReference type="InterPro" id="IPR036291">
    <property type="entry name" value="NAD(P)-bd_dom_sf"/>
</dbReference>
<dbReference type="NCBIfam" id="NF000940">
    <property type="entry name" value="PRK00094.1-2"/>
    <property type="match status" value="1"/>
</dbReference>
<dbReference type="NCBIfam" id="NF000942">
    <property type="entry name" value="PRK00094.1-4"/>
    <property type="match status" value="1"/>
</dbReference>
<dbReference type="PANTHER" id="PTHR11728">
    <property type="entry name" value="GLYCEROL-3-PHOSPHATE DEHYDROGENASE"/>
    <property type="match status" value="1"/>
</dbReference>
<dbReference type="PANTHER" id="PTHR11728:SF1">
    <property type="entry name" value="GLYCEROL-3-PHOSPHATE DEHYDROGENASE [NAD(+)] 2, CHLOROPLASTIC"/>
    <property type="match status" value="1"/>
</dbReference>
<dbReference type="Pfam" id="PF07479">
    <property type="entry name" value="NAD_Gly3P_dh_C"/>
    <property type="match status" value="1"/>
</dbReference>
<dbReference type="Pfam" id="PF01210">
    <property type="entry name" value="NAD_Gly3P_dh_N"/>
    <property type="match status" value="1"/>
</dbReference>
<dbReference type="PIRSF" id="PIRSF000114">
    <property type="entry name" value="Glycerol-3-P_dh"/>
    <property type="match status" value="1"/>
</dbReference>
<dbReference type="PRINTS" id="PR00077">
    <property type="entry name" value="GPDHDRGNASE"/>
</dbReference>
<dbReference type="SUPFAM" id="SSF48179">
    <property type="entry name" value="6-phosphogluconate dehydrogenase C-terminal domain-like"/>
    <property type="match status" value="1"/>
</dbReference>
<dbReference type="SUPFAM" id="SSF51735">
    <property type="entry name" value="NAD(P)-binding Rossmann-fold domains"/>
    <property type="match status" value="1"/>
</dbReference>
<dbReference type="PROSITE" id="PS00957">
    <property type="entry name" value="NAD_G3PDH"/>
    <property type="match status" value="1"/>
</dbReference>
<keyword id="KW-0963">Cytoplasm</keyword>
<keyword id="KW-0444">Lipid biosynthesis</keyword>
<keyword id="KW-0443">Lipid metabolism</keyword>
<keyword id="KW-0520">NAD</keyword>
<keyword id="KW-0521">NADP</keyword>
<keyword id="KW-0547">Nucleotide-binding</keyword>
<keyword id="KW-0560">Oxidoreductase</keyword>
<keyword id="KW-0594">Phospholipid biosynthesis</keyword>
<keyword id="KW-1208">Phospholipid metabolism</keyword>
<accession>A0Q4Y5</accession>
<proteinExistence type="inferred from homology"/>
<feature type="chain" id="PRO_1000049506" description="Glycerol-3-phosphate dehydrogenase [NAD(P)+]">
    <location>
        <begin position="1"/>
        <end position="332"/>
    </location>
</feature>
<feature type="active site" description="Proton acceptor" evidence="1">
    <location>
        <position position="191"/>
    </location>
</feature>
<feature type="binding site" evidence="1">
    <location>
        <position position="13"/>
    </location>
    <ligand>
        <name>NADPH</name>
        <dbReference type="ChEBI" id="CHEBI:57783"/>
    </ligand>
</feature>
<feature type="binding site" evidence="1">
    <location>
        <position position="34"/>
    </location>
    <ligand>
        <name>NADPH</name>
        <dbReference type="ChEBI" id="CHEBI:57783"/>
    </ligand>
</feature>
<feature type="binding site" evidence="1">
    <location>
        <position position="108"/>
    </location>
    <ligand>
        <name>NADPH</name>
        <dbReference type="ChEBI" id="CHEBI:57783"/>
    </ligand>
</feature>
<feature type="binding site" evidence="1">
    <location>
        <position position="108"/>
    </location>
    <ligand>
        <name>sn-glycerol 3-phosphate</name>
        <dbReference type="ChEBI" id="CHEBI:57597"/>
    </ligand>
</feature>
<feature type="binding site" evidence="1">
    <location>
        <position position="136"/>
    </location>
    <ligand>
        <name>sn-glycerol 3-phosphate</name>
        <dbReference type="ChEBI" id="CHEBI:57597"/>
    </ligand>
</feature>
<feature type="binding site" evidence="1">
    <location>
        <position position="138"/>
    </location>
    <ligand>
        <name>sn-glycerol 3-phosphate</name>
        <dbReference type="ChEBI" id="CHEBI:57597"/>
    </ligand>
</feature>
<feature type="binding site" evidence="1">
    <location>
        <position position="140"/>
    </location>
    <ligand>
        <name>NADPH</name>
        <dbReference type="ChEBI" id="CHEBI:57783"/>
    </ligand>
</feature>
<feature type="binding site" evidence="1">
    <location>
        <position position="191"/>
    </location>
    <ligand>
        <name>sn-glycerol 3-phosphate</name>
        <dbReference type="ChEBI" id="CHEBI:57597"/>
    </ligand>
</feature>
<feature type="binding site" evidence="1">
    <location>
        <position position="244"/>
    </location>
    <ligand>
        <name>sn-glycerol 3-phosphate</name>
        <dbReference type="ChEBI" id="CHEBI:57597"/>
    </ligand>
</feature>
<feature type="binding site" evidence="1">
    <location>
        <position position="254"/>
    </location>
    <ligand>
        <name>sn-glycerol 3-phosphate</name>
        <dbReference type="ChEBI" id="CHEBI:57597"/>
    </ligand>
</feature>
<feature type="binding site" evidence="1">
    <location>
        <position position="255"/>
    </location>
    <ligand>
        <name>NADPH</name>
        <dbReference type="ChEBI" id="CHEBI:57783"/>
    </ligand>
</feature>
<feature type="binding site" evidence="1">
    <location>
        <position position="255"/>
    </location>
    <ligand>
        <name>sn-glycerol 3-phosphate</name>
        <dbReference type="ChEBI" id="CHEBI:57597"/>
    </ligand>
</feature>
<feature type="binding site" evidence="1">
    <location>
        <position position="256"/>
    </location>
    <ligand>
        <name>sn-glycerol 3-phosphate</name>
        <dbReference type="ChEBI" id="CHEBI:57597"/>
    </ligand>
</feature>
<feature type="binding site" evidence="1">
    <location>
        <position position="279"/>
    </location>
    <ligand>
        <name>NADPH</name>
        <dbReference type="ChEBI" id="CHEBI:57783"/>
    </ligand>
</feature>
<feature type="binding site" evidence="1">
    <location>
        <position position="281"/>
    </location>
    <ligand>
        <name>NADPH</name>
        <dbReference type="ChEBI" id="CHEBI:57783"/>
    </ligand>
</feature>
<gene>
    <name evidence="1" type="primary">gpsA</name>
    <name type="ordered locus">FTN_0397</name>
</gene>
<reference key="1">
    <citation type="journal article" date="2007" name="Genome Biol.">
        <title>Comparison of Francisella tularensis genomes reveals evolutionary events associated with the emergence of human pathogenic strains.</title>
        <authorList>
            <person name="Rohmer L."/>
            <person name="Fong C."/>
            <person name="Abmayr S."/>
            <person name="Wasnick M."/>
            <person name="Larson Freeman T.J."/>
            <person name="Radey M."/>
            <person name="Guina T."/>
            <person name="Svensson K."/>
            <person name="Hayden H.S."/>
            <person name="Jacobs M."/>
            <person name="Gallagher L.A."/>
            <person name="Manoil C."/>
            <person name="Ernst R.K."/>
            <person name="Drees B."/>
            <person name="Buckley D."/>
            <person name="Haugen E."/>
            <person name="Bovee D."/>
            <person name="Zhou Y."/>
            <person name="Chang J."/>
            <person name="Levy R."/>
            <person name="Lim R."/>
            <person name="Gillett W."/>
            <person name="Guenthener D."/>
            <person name="Kang A."/>
            <person name="Shaffer S.A."/>
            <person name="Taylor G."/>
            <person name="Chen J."/>
            <person name="Gallis B."/>
            <person name="D'Argenio D.A."/>
            <person name="Forsman M."/>
            <person name="Olson M.V."/>
            <person name="Goodlett D.R."/>
            <person name="Kaul R."/>
            <person name="Miller S.I."/>
            <person name="Brittnacher M.J."/>
        </authorList>
    </citation>
    <scope>NUCLEOTIDE SEQUENCE [LARGE SCALE GENOMIC DNA]</scope>
    <source>
        <strain>U112</strain>
    </source>
</reference>